<comment type="function">
    <text evidence="4 5 6 7 8">NADPH-dependent oxidoreductase which catalyzes the reduction of a variety of compounds bearing carbonyl groups including steroids, retinoids and xenobiotics (PubMed:24246760, PubMed:26466768, PubMed:28457967, PubMed:28687384). Catalyzes the reduction/inactivation of 5alpha-dihydrotestosterone to 3alpha-androstanediol, with a possible role in the modulation of androgen receptor function (PubMed:28457967, PubMed:28687384). Involved in the reduction of all-trans-retinal to all-trans-retinol (PubMed:26466768). Converts cortisone to 20beta-dihydrocortisone in vitro, although the physiological relevance of this activity is questionable (PubMed:28457967). Reduces exogenous compounds such as quinones (1,2-naphtoquinone, 9,10-phenantrenequinone and benzoquinone) and other xenobiotics (alpha-diketones) in vitro, suggesting a role in the biotransformation of xenobiotics with carbonyl group (PubMed:24246760, PubMed:26466768). A dehydrogenase activity has not been detected so far (PubMed:24246760). May play a role as tumor suppressor (PubMed:26311046).</text>
</comment>
<comment type="catalytic activity">
    <reaction evidence="6">
        <text>all-trans-retinol + NADP(+) = all-trans-retinal + NADPH + H(+)</text>
        <dbReference type="Rhea" id="RHEA:25033"/>
        <dbReference type="ChEBI" id="CHEBI:15378"/>
        <dbReference type="ChEBI" id="CHEBI:17336"/>
        <dbReference type="ChEBI" id="CHEBI:17898"/>
        <dbReference type="ChEBI" id="CHEBI:57783"/>
        <dbReference type="ChEBI" id="CHEBI:58349"/>
    </reaction>
    <physiologicalReaction direction="right-to-left" evidence="13">
        <dbReference type="Rhea" id="RHEA:25035"/>
    </physiologicalReaction>
</comment>
<comment type="catalytic activity">
    <reaction evidence="7 8">
        <text>5alpha-androstane-3alpha,17beta-diol + NADP(+) = 17beta-hydroxy-5alpha-androstan-3-one + NADPH + H(+)</text>
        <dbReference type="Rhea" id="RHEA:42116"/>
        <dbReference type="ChEBI" id="CHEBI:15378"/>
        <dbReference type="ChEBI" id="CHEBI:16330"/>
        <dbReference type="ChEBI" id="CHEBI:36713"/>
        <dbReference type="ChEBI" id="CHEBI:57783"/>
        <dbReference type="ChEBI" id="CHEBI:58349"/>
    </reaction>
    <physiologicalReaction direction="right-to-left" evidence="14 15">
        <dbReference type="Rhea" id="RHEA:42118"/>
    </physiologicalReaction>
</comment>
<comment type="biophysicochemical properties">
    <kinetics>
        <KM evidence="4">20.47 uM for NADPH</KM>
        <KM evidence="4">30.08 uM for NADH</KM>
        <KM evidence="6">24.3 uM for all-trans-retinal</KM>
        <KM evidence="8">48.4 uM for 17beta-hydroxy-5alpha-androstan-3-one</KM>
        <Vmax evidence="4">10.58 nmol/min/mg enzyme with NADPH as substrate</Vmax>
        <Vmax evidence="4">2.38 nmol/min/mg enzyme with NADH as substrate</Vmax>
        <Vmax evidence="6">270.3 nmol/min/mg enzyme for the NADPH-dependent reduction of all-trans-retinal</Vmax>
        <Vmax evidence="8">34.4 nmol/min/mg enzyme for the NADPH-dependent reduction of 17beta-hydroxy-5alpha-androstan-3-one to 5alpha-androstane-3alpha,17beta-diol</Vmax>
        <text evidence="6">kcat is 10.22 min(-1) for the NADPH-dependent reduction of all-trans-retinal.</text>
    </kinetics>
</comment>
<comment type="interaction">
    <interactant intactId="EBI-1387800">
        <id>Q9Y394</id>
    </interactant>
    <interactant intactId="EBI-3917235">
        <id>Q9NTJ5</id>
        <label>SACM1L</label>
    </interactant>
    <organismsDiffer>false</organismsDiffer>
    <experiments>3</experiments>
</comment>
<comment type="interaction">
    <interactant intactId="EBI-1387800">
        <id>Q9Y394</id>
    </interactant>
    <interactant intactId="EBI-727322">
        <id>Q9BXJ8</id>
        <label>TMEM120A</label>
    </interactant>
    <organismsDiffer>false</organismsDiffer>
    <experiments>3</experiments>
</comment>
<comment type="subcellular location">
    <subcellularLocation>
        <location evidence="4 7">Endoplasmic reticulum membrane</location>
    </subcellularLocation>
    <text evidence="4 7">Bound to the endoplasmic reticulum membrane, possibly through a N-terminus anchor. The main bulk of the polypeptide chain was first reported to be facing toward the lumen of the endoplasmic reticulum (PubMed:24246760). However, it was later shown to be facing the cytosol (PubMed:28457967).</text>
</comment>
<comment type="alternative products">
    <event type="alternative splicing"/>
    <isoform>
        <id>Q9Y394-1</id>
        <name>1</name>
        <sequence type="displayed"/>
    </isoform>
    <isoform>
        <id>Q9Y394-2</id>
        <name>2</name>
        <sequence type="described" ref="VSP_008103"/>
    </isoform>
</comment>
<comment type="tissue specificity">
    <text evidence="6">Found predominantly in the adrenal glands, liver, thyroid, prostate, small intestine, colon, stomach, kidney and brain (PubMed:26466768). Lower levels observed in skeletal muscle, the lung and the spleen (PubMed:26466768).</text>
</comment>
<comment type="similarity">
    <text evidence="12">Belongs to the short-chain dehydrogenases/reductases (SDR) family.</text>
</comment>
<comment type="caution">
    <text evidence="4 7">DHRS7 was originally reported to be anchored in the endoplasmic reticulum membrane and facing the lumen (PubMed:24246760). However, the catalytic moiety was later shown to be facing the cytosol (PubMed:28457967).</text>
</comment>
<proteinExistence type="evidence at protein level"/>
<keyword id="KW-0025">Alternative splicing</keyword>
<keyword id="KW-0256">Endoplasmic reticulum</keyword>
<keyword id="KW-0472">Membrane</keyword>
<keyword id="KW-0520">NAD</keyword>
<keyword id="KW-0521">NADP</keyword>
<keyword id="KW-0560">Oxidoreductase</keyword>
<keyword id="KW-1267">Proteomics identification</keyword>
<keyword id="KW-1185">Reference proteome</keyword>
<keyword id="KW-0732">Signal</keyword>
<evidence type="ECO:0000250" key="1">
    <source>
        <dbReference type="UniProtKB" id="Q99714"/>
    </source>
</evidence>
<evidence type="ECO:0000255" key="2"/>
<evidence type="ECO:0000255" key="3">
    <source>
        <dbReference type="PROSITE-ProRule" id="PRU10001"/>
    </source>
</evidence>
<evidence type="ECO:0000269" key="4">
    <source>
    </source>
</evidence>
<evidence type="ECO:0000269" key="5">
    <source>
    </source>
</evidence>
<evidence type="ECO:0000269" key="6">
    <source>
    </source>
</evidence>
<evidence type="ECO:0000269" key="7">
    <source>
    </source>
</evidence>
<evidence type="ECO:0000269" key="8">
    <source>
    </source>
</evidence>
<evidence type="ECO:0000303" key="9">
    <source>
    </source>
</evidence>
<evidence type="ECO:0000303" key="10">
    <source>
    </source>
</evidence>
<evidence type="ECO:0000303" key="11">
    <source>
    </source>
</evidence>
<evidence type="ECO:0000305" key="12"/>
<evidence type="ECO:0000305" key="13">
    <source>
    </source>
</evidence>
<evidence type="ECO:0000305" key="14">
    <source>
    </source>
</evidence>
<evidence type="ECO:0000305" key="15">
    <source>
    </source>
</evidence>
<evidence type="ECO:0000312" key="16">
    <source>
        <dbReference type="HGNC" id="HGNC:21524"/>
    </source>
</evidence>
<organism>
    <name type="scientific">Homo sapiens</name>
    <name type="common">Human</name>
    <dbReference type="NCBI Taxonomy" id="9606"/>
    <lineage>
        <taxon>Eukaryota</taxon>
        <taxon>Metazoa</taxon>
        <taxon>Chordata</taxon>
        <taxon>Craniata</taxon>
        <taxon>Vertebrata</taxon>
        <taxon>Euteleostomi</taxon>
        <taxon>Mammalia</taxon>
        <taxon>Eutheria</taxon>
        <taxon>Euarchontoglires</taxon>
        <taxon>Primates</taxon>
        <taxon>Haplorrhini</taxon>
        <taxon>Catarrhini</taxon>
        <taxon>Hominidae</taxon>
        <taxon>Homo</taxon>
    </lineage>
</organism>
<gene>
    <name evidence="16" type="primary">DHRS7</name>
    <name type="synonym">DHRS7A</name>
    <name evidence="9" type="synonym">RETSDR4</name>
    <name evidence="11" type="synonym">SDR34C1</name>
    <name type="ORF">CGI-86</name>
    <name type="ORF">UNQ285/PRO3448</name>
</gene>
<dbReference type="EC" id="1.1.1.-" evidence="4 6 7 8"/>
<dbReference type="EMBL" id="AF151844">
    <property type="protein sequence ID" value="AAD34081.1"/>
    <property type="molecule type" value="mRNA"/>
</dbReference>
<dbReference type="EMBL" id="AF126782">
    <property type="protein sequence ID" value="AAF06941.1"/>
    <property type="molecule type" value="mRNA"/>
</dbReference>
<dbReference type="EMBL" id="AY359031">
    <property type="protein sequence ID" value="AAQ89390.1"/>
    <property type="molecule type" value="mRNA"/>
</dbReference>
<dbReference type="EMBL" id="AK313285">
    <property type="protein sequence ID" value="BAG36093.1"/>
    <property type="molecule type" value="mRNA"/>
</dbReference>
<dbReference type="EMBL" id="AL163853">
    <property type="status" value="NOT_ANNOTATED_CDS"/>
    <property type="molecule type" value="Genomic_DNA"/>
</dbReference>
<dbReference type="EMBL" id="CH471061">
    <property type="protein sequence ID" value="EAW80770.1"/>
    <property type="molecule type" value="Genomic_DNA"/>
</dbReference>
<dbReference type="EMBL" id="BC000637">
    <property type="protein sequence ID" value="AAH00637.1"/>
    <property type="molecule type" value="mRNA"/>
</dbReference>
<dbReference type="EMBL" id="BC007337">
    <property type="protein sequence ID" value="AAH07337.1"/>
    <property type="molecule type" value="mRNA"/>
</dbReference>
<dbReference type="CCDS" id="CCDS81810.1">
    <molecule id="Q9Y394-2"/>
</dbReference>
<dbReference type="CCDS" id="CCDS9743.1">
    <molecule id="Q9Y394-1"/>
</dbReference>
<dbReference type="RefSeq" id="NP_001309209.1">
    <molecule id="Q9Y394-2"/>
    <property type="nucleotide sequence ID" value="NM_001322280.2"/>
</dbReference>
<dbReference type="RefSeq" id="NP_057113.1">
    <molecule id="Q9Y394-1"/>
    <property type="nucleotide sequence ID" value="NM_016029.4"/>
</dbReference>
<dbReference type="SMR" id="Q9Y394"/>
<dbReference type="BioGRID" id="119649">
    <property type="interactions" value="169"/>
</dbReference>
<dbReference type="FunCoup" id="Q9Y394">
    <property type="interactions" value="1055"/>
</dbReference>
<dbReference type="IntAct" id="Q9Y394">
    <property type="interactions" value="89"/>
</dbReference>
<dbReference type="MINT" id="Q9Y394"/>
<dbReference type="STRING" id="9606.ENSP00000216500"/>
<dbReference type="GlyGen" id="Q9Y394">
    <property type="glycosylation" value="1 site, 1 O-linked glycan (1 site)"/>
</dbReference>
<dbReference type="iPTMnet" id="Q9Y394"/>
<dbReference type="PhosphoSitePlus" id="Q9Y394"/>
<dbReference type="SwissPalm" id="Q9Y394"/>
<dbReference type="BioMuta" id="DHRS7"/>
<dbReference type="DMDM" id="34395856"/>
<dbReference type="jPOST" id="Q9Y394"/>
<dbReference type="MassIVE" id="Q9Y394"/>
<dbReference type="PaxDb" id="9606-ENSP00000216500"/>
<dbReference type="PeptideAtlas" id="Q9Y394"/>
<dbReference type="ProteomicsDB" id="85986">
    <molecule id="Q9Y394-1"/>
</dbReference>
<dbReference type="ProteomicsDB" id="85987">
    <molecule id="Q9Y394-2"/>
</dbReference>
<dbReference type="Pumba" id="Q9Y394"/>
<dbReference type="Antibodypedia" id="24356">
    <property type="antibodies" value="233 antibodies from 28 providers"/>
</dbReference>
<dbReference type="DNASU" id="51635"/>
<dbReference type="Ensembl" id="ENST00000216500.9">
    <molecule id="Q9Y394-1"/>
    <property type="protein sequence ID" value="ENSP00000216500.5"/>
    <property type="gene ID" value="ENSG00000100612.14"/>
</dbReference>
<dbReference type="Ensembl" id="ENST00000536410.6">
    <molecule id="Q9Y394-2"/>
    <property type="protein sequence ID" value="ENSP00000442993.2"/>
    <property type="gene ID" value="ENSG00000100612.14"/>
</dbReference>
<dbReference type="Ensembl" id="ENST00000557185.6">
    <molecule id="Q9Y394-1"/>
    <property type="protein sequence ID" value="ENSP00000451882.1"/>
    <property type="gene ID" value="ENSG00000100612.14"/>
</dbReference>
<dbReference type="GeneID" id="51635"/>
<dbReference type="KEGG" id="hsa:51635"/>
<dbReference type="MANE-Select" id="ENST00000557185.6">
    <property type="protein sequence ID" value="ENSP00000451882.1"/>
    <property type="RefSeq nucleotide sequence ID" value="NM_016029.4"/>
    <property type="RefSeq protein sequence ID" value="NP_057113.1"/>
</dbReference>
<dbReference type="UCSC" id="uc001xes.5">
    <molecule id="Q9Y394-1"/>
    <property type="organism name" value="human"/>
</dbReference>
<dbReference type="AGR" id="HGNC:21524"/>
<dbReference type="CTD" id="51635"/>
<dbReference type="DisGeNET" id="51635"/>
<dbReference type="GeneCards" id="DHRS7"/>
<dbReference type="HGNC" id="HGNC:21524">
    <property type="gene designation" value="DHRS7"/>
</dbReference>
<dbReference type="HPA" id="ENSG00000100612">
    <property type="expression patterns" value="Tissue enhanced (skeletal)"/>
</dbReference>
<dbReference type="MIM" id="612833">
    <property type="type" value="gene"/>
</dbReference>
<dbReference type="neXtProt" id="NX_Q9Y394"/>
<dbReference type="OpenTargets" id="ENSG00000100612"/>
<dbReference type="PharmGKB" id="PA134974539"/>
<dbReference type="VEuPathDB" id="HostDB:ENSG00000100612"/>
<dbReference type="eggNOG" id="KOG1205">
    <property type="taxonomic scope" value="Eukaryota"/>
</dbReference>
<dbReference type="GeneTree" id="ENSGT00940000155226"/>
<dbReference type="HOGENOM" id="CLU_010194_2_1_1"/>
<dbReference type="InParanoid" id="Q9Y394"/>
<dbReference type="OMA" id="TWAWWLT"/>
<dbReference type="OrthoDB" id="1933717at2759"/>
<dbReference type="PAN-GO" id="Q9Y394">
    <property type="GO annotations" value="0 GO annotations based on evolutionary models"/>
</dbReference>
<dbReference type="PhylomeDB" id="Q9Y394"/>
<dbReference type="TreeFam" id="TF354276"/>
<dbReference type="PathwayCommons" id="Q9Y394"/>
<dbReference type="SignaLink" id="Q9Y394"/>
<dbReference type="BioGRID-ORCS" id="51635">
    <property type="hits" value="12 hits in 1162 CRISPR screens"/>
</dbReference>
<dbReference type="ChiTaRS" id="DHRS7">
    <property type="organism name" value="human"/>
</dbReference>
<dbReference type="GenomeRNAi" id="51635"/>
<dbReference type="Pharos" id="Q9Y394">
    <property type="development level" value="Tbio"/>
</dbReference>
<dbReference type="PRO" id="PR:Q9Y394"/>
<dbReference type="Proteomes" id="UP000005640">
    <property type="component" value="Chromosome 14"/>
</dbReference>
<dbReference type="RNAct" id="Q9Y394">
    <property type="molecule type" value="protein"/>
</dbReference>
<dbReference type="Bgee" id="ENSG00000100612">
    <property type="expression patterns" value="Expressed in parotid gland and 204 other cell types or tissues"/>
</dbReference>
<dbReference type="ExpressionAtlas" id="Q9Y394">
    <property type="expression patterns" value="baseline and differential"/>
</dbReference>
<dbReference type="GO" id="GO:0005789">
    <property type="term" value="C:endoplasmic reticulum membrane"/>
    <property type="evidence" value="ECO:0000314"/>
    <property type="project" value="UniProtKB"/>
</dbReference>
<dbReference type="GO" id="GO:0016020">
    <property type="term" value="C:membrane"/>
    <property type="evidence" value="ECO:0007005"/>
    <property type="project" value="UniProtKB"/>
</dbReference>
<dbReference type="GO" id="GO:0052650">
    <property type="term" value="F:all-trans-retinol dehydrogenase (NADP+) activity"/>
    <property type="evidence" value="ECO:0000314"/>
    <property type="project" value="UniProtKB"/>
</dbReference>
<dbReference type="GO" id="GO:0004090">
    <property type="term" value="F:carbonyl reductase (NADPH) activity"/>
    <property type="evidence" value="ECO:0000314"/>
    <property type="project" value="UniProtKB"/>
</dbReference>
<dbReference type="GO" id="GO:0016616">
    <property type="term" value="F:oxidoreductase activity, acting on the CH-OH group of donors, NAD or NADP as acceptor"/>
    <property type="evidence" value="ECO:0000314"/>
    <property type="project" value="UniProtKB"/>
</dbReference>
<dbReference type="CDD" id="cd05332">
    <property type="entry name" value="11beta-HSD1_like_SDR_c"/>
    <property type="match status" value="1"/>
</dbReference>
<dbReference type="FunFam" id="3.40.50.720:FF:000478">
    <property type="entry name" value="Dehydrogenase/reductase SDR family member 7"/>
    <property type="match status" value="1"/>
</dbReference>
<dbReference type="Gene3D" id="3.40.50.720">
    <property type="entry name" value="NAD(P)-binding Rossmann-like Domain"/>
    <property type="match status" value="1"/>
</dbReference>
<dbReference type="InterPro" id="IPR036291">
    <property type="entry name" value="NAD(P)-bd_dom_sf"/>
</dbReference>
<dbReference type="InterPro" id="IPR020904">
    <property type="entry name" value="Sc_DH/Rdtase_CS"/>
</dbReference>
<dbReference type="InterPro" id="IPR002347">
    <property type="entry name" value="SDR_fam"/>
</dbReference>
<dbReference type="InterPro" id="IPR053011">
    <property type="entry name" value="SDR_family_member_7"/>
</dbReference>
<dbReference type="PANTHER" id="PTHR44269">
    <property type="entry name" value="DEHYDROGENASE/REDUCTASE SDR FAMILY MEMBER 7-RELATED"/>
    <property type="match status" value="1"/>
</dbReference>
<dbReference type="PANTHER" id="PTHR44269:SF1">
    <property type="entry name" value="DEHYDROGENASE_REDUCTASE SDR FAMILY MEMBER 7"/>
    <property type="match status" value="1"/>
</dbReference>
<dbReference type="Pfam" id="PF00106">
    <property type="entry name" value="adh_short"/>
    <property type="match status" value="1"/>
</dbReference>
<dbReference type="PRINTS" id="PR00081">
    <property type="entry name" value="GDHRDH"/>
</dbReference>
<dbReference type="PRINTS" id="PR00080">
    <property type="entry name" value="SDRFAMILY"/>
</dbReference>
<dbReference type="SUPFAM" id="SSF51735">
    <property type="entry name" value="NAD(P)-binding Rossmann-fold domains"/>
    <property type="match status" value="1"/>
</dbReference>
<dbReference type="PROSITE" id="PS00061">
    <property type="entry name" value="ADH_SHORT"/>
    <property type="match status" value="1"/>
</dbReference>
<name>DHRS7_HUMAN</name>
<reference key="1">
    <citation type="journal article" date="2000" name="Genome Res.">
        <title>Identification of novel human genes evolutionarily conserved in Caenorhabditis elegans by comparative proteomics.</title>
        <authorList>
            <person name="Lai C.-H."/>
            <person name="Chou C.-Y."/>
            <person name="Ch'ang L.-Y."/>
            <person name="Liu C.-S."/>
            <person name="Lin W.-C."/>
        </authorList>
    </citation>
    <scope>NUCLEOTIDE SEQUENCE [LARGE SCALE MRNA] (ISOFORM 1)</scope>
</reference>
<reference key="2">
    <citation type="journal article" date="2000" name="Methods Enzymol.">
        <title>Short-chain dehydrogenases/reductases in retina.</title>
        <authorList>
            <person name="Haeseleer F."/>
            <person name="Palczewski K."/>
        </authorList>
    </citation>
    <scope>NUCLEOTIDE SEQUENCE (ISOFORM 2)</scope>
    <source>
        <tissue>Retina</tissue>
    </source>
</reference>
<reference key="3">
    <citation type="journal article" date="2003" name="Genome Res.">
        <title>The secreted protein discovery initiative (SPDI), a large-scale effort to identify novel human secreted and transmembrane proteins: a bioinformatics assessment.</title>
        <authorList>
            <person name="Clark H.F."/>
            <person name="Gurney A.L."/>
            <person name="Abaya E."/>
            <person name="Baker K."/>
            <person name="Baldwin D.T."/>
            <person name="Brush J."/>
            <person name="Chen J."/>
            <person name="Chow B."/>
            <person name="Chui C."/>
            <person name="Crowley C."/>
            <person name="Currell B."/>
            <person name="Deuel B."/>
            <person name="Dowd P."/>
            <person name="Eaton D."/>
            <person name="Foster J.S."/>
            <person name="Grimaldi C."/>
            <person name="Gu Q."/>
            <person name="Hass P.E."/>
            <person name="Heldens S."/>
            <person name="Huang A."/>
            <person name="Kim H.S."/>
            <person name="Klimowski L."/>
            <person name="Jin Y."/>
            <person name="Johnson S."/>
            <person name="Lee J."/>
            <person name="Lewis L."/>
            <person name="Liao D."/>
            <person name="Mark M.R."/>
            <person name="Robbie E."/>
            <person name="Sanchez C."/>
            <person name="Schoenfeld J."/>
            <person name="Seshagiri S."/>
            <person name="Simmons L."/>
            <person name="Singh J."/>
            <person name="Smith V."/>
            <person name="Stinson J."/>
            <person name="Vagts A."/>
            <person name="Vandlen R.L."/>
            <person name="Watanabe C."/>
            <person name="Wieand D."/>
            <person name="Woods K."/>
            <person name="Xie M.-H."/>
            <person name="Yansura D.G."/>
            <person name="Yi S."/>
            <person name="Yu G."/>
            <person name="Yuan J."/>
            <person name="Zhang M."/>
            <person name="Zhang Z."/>
            <person name="Goddard A.D."/>
            <person name="Wood W.I."/>
            <person name="Godowski P.J."/>
            <person name="Gray A.M."/>
        </authorList>
    </citation>
    <scope>NUCLEOTIDE SEQUENCE [LARGE SCALE MRNA] (ISOFORM 2)</scope>
</reference>
<reference key="4">
    <citation type="journal article" date="2004" name="Nat. Genet.">
        <title>Complete sequencing and characterization of 21,243 full-length human cDNAs.</title>
        <authorList>
            <person name="Ota T."/>
            <person name="Suzuki Y."/>
            <person name="Nishikawa T."/>
            <person name="Otsuki T."/>
            <person name="Sugiyama T."/>
            <person name="Irie R."/>
            <person name="Wakamatsu A."/>
            <person name="Hayashi K."/>
            <person name="Sato H."/>
            <person name="Nagai K."/>
            <person name="Kimura K."/>
            <person name="Makita H."/>
            <person name="Sekine M."/>
            <person name="Obayashi M."/>
            <person name="Nishi T."/>
            <person name="Shibahara T."/>
            <person name="Tanaka T."/>
            <person name="Ishii S."/>
            <person name="Yamamoto J."/>
            <person name="Saito K."/>
            <person name="Kawai Y."/>
            <person name="Isono Y."/>
            <person name="Nakamura Y."/>
            <person name="Nagahari K."/>
            <person name="Murakami K."/>
            <person name="Yasuda T."/>
            <person name="Iwayanagi T."/>
            <person name="Wagatsuma M."/>
            <person name="Shiratori A."/>
            <person name="Sudo H."/>
            <person name="Hosoiri T."/>
            <person name="Kaku Y."/>
            <person name="Kodaira H."/>
            <person name="Kondo H."/>
            <person name="Sugawara M."/>
            <person name="Takahashi M."/>
            <person name="Kanda K."/>
            <person name="Yokoi T."/>
            <person name="Furuya T."/>
            <person name="Kikkawa E."/>
            <person name="Omura Y."/>
            <person name="Abe K."/>
            <person name="Kamihara K."/>
            <person name="Katsuta N."/>
            <person name="Sato K."/>
            <person name="Tanikawa M."/>
            <person name="Yamazaki M."/>
            <person name="Ninomiya K."/>
            <person name="Ishibashi T."/>
            <person name="Yamashita H."/>
            <person name="Murakawa K."/>
            <person name="Fujimori K."/>
            <person name="Tanai H."/>
            <person name="Kimata M."/>
            <person name="Watanabe M."/>
            <person name="Hiraoka S."/>
            <person name="Chiba Y."/>
            <person name="Ishida S."/>
            <person name="Ono Y."/>
            <person name="Takiguchi S."/>
            <person name="Watanabe S."/>
            <person name="Yosida M."/>
            <person name="Hotuta T."/>
            <person name="Kusano J."/>
            <person name="Kanehori K."/>
            <person name="Takahashi-Fujii A."/>
            <person name="Hara H."/>
            <person name="Tanase T.-O."/>
            <person name="Nomura Y."/>
            <person name="Togiya S."/>
            <person name="Komai F."/>
            <person name="Hara R."/>
            <person name="Takeuchi K."/>
            <person name="Arita M."/>
            <person name="Imose N."/>
            <person name="Musashino K."/>
            <person name="Yuuki H."/>
            <person name="Oshima A."/>
            <person name="Sasaki N."/>
            <person name="Aotsuka S."/>
            <person name="Yoshikawa Y."/>
            <person name="Matsunawa H."/>
            <person name="Ichihara T."/>
            <person name="Shiohata N."/>
            <person name="Sano S."/>
            <person name="Moriya S."/>
            <person name="Momiyama H."/>
            <person name="Satoh N."/>
            <person name="Takami S."/>
            <person name="Terashima Y."/>
            <person name="Suzuki O."/>
            <person name="Nakagawa S."/>
            <person name="Senoh A."/>
            <person name="Mizoguchi H."/>
            <person name="Goto Y."/>
            <person name="Shimizu F."/>
            <person name="Wakebe H."/>
            <person name="Hishigaki H."/>
            <person name="Watanabe T."/>
            <person name="Sugiyama A."/>
            <person name="Takemoto M."/>
            <person name="Kawakami B."/>
            <person name="Yamazaki M."/>
            <person name="Watanabe K."/>
            <person name="Kumagai A."/>
            <person name="Itakura S."/>
            <person name="Fukuzumi Y."/>
            <person name="Fujimori Y."/>
            <person name="Komiyama M."/>
            <person name="Tashiro H."/>
            <person name="Tanigami A."/>
            <person name="Fujiwara T."/>
            <person name="Ono T."/>
            <person name="Yamada K."/>
            <person name="Fujii Y."/>
            <person name="Ozaki K."/>
            <person name="Hirao M."/>
            <person name="Ohmori Y."/>
            <person name="Kawabata A."/>
            <person name="Hikiji T."/>
            <person name="Kobatake N."/>
            <person name="Inagaki H."/>
            <person name="Ikema Y."/>
            <person name="Okamoto S."/>
            <person name="Okitani R."/>
            <person name="Kawakami T."/>
            <person name="Noguchi S."/>
            <person name="Itoh T."/>
            <person name="Shigeta K."/>
            <person name="Senba T."/>
            <person name="Matsumura K."/>
            <person name="Nakajima Y."/>
            <person name="Mizuno T."/>
            <person name="Morinaga M."/>
            <person name="Sasaki M."/>
            <person name="Togashi T."/>
            <person name="Oyama M."/>
            <person name="Hata H."/>
            <person name="Watanabe M."/>
            <person name="Komatsu T."/>
            <person name="Mizushima-Sugano J."/>
            <person name="Satoh T."/>
            <person name="Shirai Y."/>
            <person name="Takahashi Y."/>
            <person name="Nakagawa K."/>
            <person name="Okumura K."/>
            <person name="Nagase T."/>
            <person name="Nomura N."/>
            <person name="Kikuchi H."/>
            <person name="Masuho Y."/>
            <person name="Yamashita R."/>
            <person name="Nakai K."/>
            <person name="Yada T."/>
            <person name="Nakamura Y."/>
            <person name="Ohara O."/>
            <person name="Isogai T."/>
            <person name="Sugano S."/>
        </authorList>
    </citation>
    <scope>NUCLEOTIDE SEQUENCE [LARGE SCALE MRNA] (ISOFORM 1)</scope>
    <source>
        <tissue>Skeletal muscle</tissue>
    </source>
</reference>
<reference key="5">
    <citation type="journal article" date="2003" name="Nature">
        <title>The DNA sequence and analysis of human chromosome 14.</title>
        <authorList>
            <person name="Heilig R."/>
            <person name="Eckenberg R."/>
            <person name="Petit J.-L."/>
            <person name="Fonknechten N."/>
            <person name="Da Silva C."/>
            <person name="Cattolico L."/>
            <person name="Levy M."/>
            <person name="Barbe V."/>
            <person name="De Berardinis V."/>
            <person name="Ureta-Vidal A."/>
            <person name="Pelletier E."/>
            <person name="Vico V."/>
            <person name="Anthouard V."/>
            <person name="Rowen L."/>
            <person name="Madan A."/>
            <person name="Qin S."/>
            <person name="Sun H."/>
            <person name="Du H."/>
            <person name="Pepin K."/>
            <person name="Artiguenave F."/>
            <person name="Robert C."/>
            <person name="Cruaud C."/>
            <person name="Bruels T."/>
            <person name="Jaillon O."/>
            <person name="Friedlander L."/>
            <person name="Samson G."/>
            <person name="Brottier P."/>
            <person name="Cure S."/>
            <person name="Segurens B."/>
            <person name="Aniere F."/>
            <person name="Samain S."/>
            <person name="Crespeau H."/>
            <person name="Abbasi N."/>
            <person name="Aiach N."/>
            <person name="Boscus D."/>
            <person name="Dickhoff R."/>
            <person name="Dors M."/>
            <person name="Dubois I."/>
            <person name="Friedman C."/>
            <person name="Gouyvenoux M."/>
            <person name="James R."/>
            <person name="Madan A."/>
            <person name="Mairey-Estrada B."/>
            <person name="Mangenot S."/>
            <person name="Martins N."/>
            <person name="Menard M."/>
            <person name="Oztas S."/>
            <person name="Ratcliffe A."/>
            <person name="Shaffer T."/>
            <person name="Trask B."/>
            <person name="Vacherie B."/>
            <person name="Bellemere C."/>
            <person name="Belser C."/>
            <person name="Besnard-Gonnet M."/>
            <person name="Bartol-Mavel D."/>
            <person name="Boutard M."/>
            <person name="Briez-Silla S."/>
            <person name="Combette S."/>
            <person name="Dufosse-Laurent V."/>
            <person name="Ferron C."/>
            <person name="Lechaplais C."/>
            <person name="Louesse C."/>
            <person name="Muselet D."/>
            <person name="Magdelenat G."/>
            <person name="Pateau E."/>
            <person name="Petit E."/>
            <person name="Sirvain-Trukniewicz P."/>
            <person name="Trybou A."/>
            <person name="Vega-Czarny N."/>
            <person name="Bataille E."/>
            <person name="Bluet E."/>
            <person name="Bordelais I."/>
            <person name="Dubois M."/>
            <person name="Dumont C."/>
            <person name="Guerin T."/>
            <person name="Haffray S."/>
            <person name="Hammadi R."/>
            <person name="Muanga J."/>
            <person name="Pellouin V."/>
            <person name="Robert D."/>
            <person name="Wunderle E."/>
            <person name="Gauguet G."/>
            <person name="Roy A."/>
            <person name="Sainte-Marthe L."/>
            <person name="Verdier J."/>
            <person name="Verdier-Discala C."/>
            <person name="Hillier L.W."/>
            <person name="Fulton L."/>
            <person name="McPherson J."/>
            <person name="Matsuda F."/>
            <person name="Wilson R."/>
            <person name="Scarpelli C."/>
            <person name="Gyapay G."/>
            <person name="Wincker P."/>
            <person name="Saurin W."/>
            <person name="Quetier F."/>
            <person name="Waterston R."/>
            <person name="Hood L."/>
            <person name="Weissenbach J."/>
        </authorList>
    </citation>
    <scope>NUCLEOTIDE SEQUENCE [LARGE SCALE GENOMIC DNA]</scope>
</reference>
<reference key="6">
    <citation type="submission" date="2005-07" db="EMBL/GenBank/DDBJ databases">
        <authorList>
            <person name="Mural R.J."/>
            <person name="Istrail S."/>
            <person name="Sutton G.G."/>
            <person name="Florea L."/>
            <person name="Halpern A.L."/>
            <person name="Mobarry C.M."/>
            <person name="Lippert R."/>
            <person name="Walenz B."/>
            <person name="Shatkay H."/>
            <person name="Dew I."/>
            <person name="Miller J.R."/>
            <person name="Flanigan M.J."/>
            <person name="Edwards N.J."/>
            <person name="Bolanos R."/>
            <person name="Fasulo D."/>
            <person name="Halldorsson B.V."/>
            <person name="Hannenhalli S."/>
            <person name="Turner R."/>
            <person name="Yooseph S."/>
            <person name="Lu F."/>
            <person name="Nusskern D.R."/>
            <person name="Shue B.C."/>
            <person name="Zheng X.H."/>
            <person name="Zhong F."/>
            <person name="Delcher A.L."/>
            <person name="Huson D.H."/>
            <person name="Kravitz S.A."/>
            <person name="Mouchard L."/>
            <person name="Reinert K."/>
            <person name="Remington K.A."/>
            <person name="Clark A.G."/>
            <person name="Waterman M.S."/>
            <person name="Eichler E.E."/>
            <person name="Adams M.D."/>
            <person name="Hunkapiller M.W."/>
            <person name="Myers E.W."/>
            <person name="Venter J.C."/>
        </authorList>
    </citation>
    <scope>NUCLEOTIDE SEQUENCE [LARGE SCALE GENOMIC DNA]</scope>
</reference>
<reference key="7">
    <citation type="journal article" date="2004" name="Genome Res.">
        <title>The status, quality, and expansion of the NIH full-length cDNA project: the Mammalian Gene Collection (MGC).</title>
        <authorList>
            <consortium name="The MGC Project Team"/>
        </authorList>
    </citation>
    <scope>NUCLEOTIDE SEQUENCE [LARGE SCALE MRNA] (ISOFORM 1)</scope>
    <source>
        <tissue>Eye</tissue>
        <tissue>Skin</tissue>
    </source>
</reference>
<reference key="8">
    <citation type="journal article" date="2009" name="Chem. Biol. Interact.">
        <title>The SDR (short-chain dehydrogenase/reductase and related enzymes) nomenclature initiative.</title>
        <authorList>
            <person name="Persson B."/>
            <person name="Kallberg Y."/>
            <person name="Bray J.E."/>
            <person name="Bruford E."/>
            <person name="Dellaporta S.L."/>
            <person name="Favia A.D."/>
            <person name="Duarte R.G."/>
            <person name="Joernvall H."/>
            <person name="Kavanagh K.L."/>
            <person name="Kedishvili N."/>
            <person name="Kisiela M."/>
            <person name="Maser E."/>
            <person name="Mindnich R."/>
            <person name="Orchard S."/>
            <person name="Penning T.M."/>
            <person name="Thornton J.M."/>
            <person name="Adamski J."/>
            <person name="Oppermann U."/>
        </authorList>
    </citation>
    <scope>GENE FAMILY</scope>
    <scope>NOMENCLATURE</scope>
</reference>
<reference key="9">
    <citation type="journal article" date="2011" name="BMC Syst. Biol.">
        <title>Initial characterization of the human central proteome.</title>
        <authorList>
            <person name="Burkard T.R."/>
            <person name="Planyavsky M."/>
            <person name="Kaupe I."/>
            <person name="Breitwieser F.P."/>
            <person name="Buerckstuemmer T."/>
            <person name="Bennett K.L."/>
            <person name="Superti-Furga G."/>
            <person name="Colinge J."/>
        </authorList>
    </citation>
    <scope>IDENTIFICATION BY MASS SPECTROMETRY [LARGE SCALE ANALYSIS]</scope>
</reference>
<reference key="10">
    <citation type="journal article" date="2014" name="Chem. Biol. Interact.">
        <title>Biochemical properties of human dehydrogenase/reductase (SDR family) member 7.</title>
        <authorList>
            <person name="Stambergova H."/>
            <person name="Skarydova L."/>
            <person name="Dunford J.E."/>
            <person name="Wsol V."/>
        </authorList>
    </citation>
    <scope>FUNCTION</scope>
    <scope>BIOPHYSICOCHEMICAL PROPERTIES</scope>
    <scope>SUBCELLULAR LOCATION</scope>
</reference>
<reference key="11">
    <citation type="journal article" date="2014" name="J. Proteomics">
        <title>An enzyme assisted RP-RPLC approach for in-depth analysis of human liver phosphoproteome.</title>
        <authorList>
            <person name="Bian Y."/>
            <person name="Song C."/>
            <person name="Cheng K."/>
            <person name="Dong M."/>
            <person name="Wang F."/>
            <person name="Huang J."/>
            <person name="Sun D."/>
            <person name="Wang L."/>
            <person name="Ye M."/>
            <person name="Zou H."/>
        </authorList>
    </citation>
    <scope>IDENTIFICATION BY MASS SPECTROMETRY [LARGE SCALE ANALYSIS]</scope>
    <source>
        <tissue>Liver</tissue>
    </source>
</reference>
<reference key="12">
    <citation type="journal article" date="2015" name="Cancer Med.">
        <title>A role for the dehydrogenase DHRS7 (SDR34C1) in prostate cancer.</title>
        <authorList>
            <person name="Seibert J.K."/>
            <person name="Quagliata L."/>
            <person name="Quintavalle C."/>
            <person name="Hammond T.G."/>
            <person name="Terracciano L."/>
            <person name="Odermatt A."/>
        </authorList>
    </citation>
    <scope>FUNCTION</scope>
</reference>
<reference key="13">
    <citation type="journal article" date="2015" name="Proteomics">
        <title>N-terminome analysis of the human mitochondrial proteome.</title>
        <authorList>
            <person name="Vaca Jacome A.S."/>
            <person name="Rabilloud T."/>
            <person name="Schaeffer-Reiss C."/>
            <person name="Rompais M."/>
            <person name="Ayoub D."/>
            <person name="Lane L."/>
            <person name="Bairoch A."/>
            <person name="Van Dorsselaer A."/>
            <person name="Carapito C."/>
        </authorList>
    </citation>
    <scope>IDENTIFICATION BY MASS SPECTROMETRY [LARGE SCALE ANALYSIS]</scope>
</reference>
<reference key="14">
    <citation type="journal article" date="2016" name="J. Steroid Biochem. Mol. Biol.">
        <title>Human DHRS7, promising enzyme in metabolism of steroids and retinoids?</title>
        <authorList>
            <person name="Stambergova H."/>
            <person name="Zemanova L."/>
            <person name="Lundova T."/>
            <person name="Malcekova B."/>
            <person name="Skarka A."/>
            <person name="Safr M."/>
            <person name="Wsol V."/>
        </authorList>
    </citation>
    <scope>FUNCTION</scope>
    <scope>CATALYTIC ACTIVITY</scope>
    <scope>BIOPHYSICOCHEMICAL PROPERTIES</scope>
    <scope>TISSUE SPECIFICITY</scope>
</reference>
<reference key="15">
    <citation type="journal article" date="2017" name="Int. J. Biol. Macromol.">
        <title>The identification of new substrates of human DHRS7 by molecular modeling and in vitro testing.</title>
        <authorList>
            <person name="Zemanova L."/>
            <person name="Kirubakaran P."/>
            <person name="Pato I.H."/>
            <person name="Stambergova H."/>
            <person name="Vondrasek J."/>
        </authorList>
    </citation>
    <scope>FUNCTION</scope>
    <scope>CATALYTIC ACTIVITY</scope>
    <scope>BIOPHYSICOCHEMICAL PROPERTIES</scope>
</reference>
<reference key="16">
    <citation type="journal article" date="2017" name="J. Steroid Biochem. Mol. Biol.">
        <title>DHRS7 (SDR34C1) - A new player in the regulation of androgen receptor function by inactivation of 5alpha-dihydrotestosterone?</title>
        <authorList>
            <person name="Araya S."/>
            <person name="Kratschmar D.V."/>
            <person name="Tsachaki M."/>
            <person name="Stuecheli S."/>
            <person name="Beck K.R."/>
            <person name="Odermatt A."/>
        </authorList>
    </citation>
    <scope>FUNCTION</scope>
    <scope>CATALYTIC ACTIVITY</scope>
    <scope>SUBCELLULAR LOCATION</scope>
</reference>
<protein>
    <recommendedName>
        <fullName evidence="11">Dehydrogenase/reductase SDR family member 7</fullName>
        <ecNumber evidence="4 6 7 8">1.1.1.-</ecNumber>
    </recommendedName>
    <alternativeName>
        <fullName evidence="9">Retinal short-chain dehydrogenase/reductase 4</fullName>
        <shortName evidence="9">retSDR4</shortName>
    </alternativeName>
    <alternativeName>
        <fullName evidence="11">Short chain dehydrogenase/reductase family 34C member 1</fullName>
        <shortName evidence="11">Protein SDR34C1</shortName>
    </alternativeName>
</protein>
<feature type="signal peptide" evidence="2">
    <location>
        <begin position="1"/>
        <end position="28"/>
    </location>
</feature>
<feature type="chain" id="PRO_0000031968" description="Dehydrogenase/reductase SDR family member 7">
    <location>
        <begin position="29"/>
        <end position="339"/>
    </location>
</feature>
<feature type="active site" description="Proton acceptor" evidence="3">
    <location>
        <position position="203"/>
    </location>
</feature>
<feature type="binding site" evidence="1">
    <location>
        <position position="60"/>
    </location>
    <ligand>
        <name>NAD(+)</name>
        <dbReference type="ChEBI" id="CHEBI:57540"/>
    </ligand>
</feature>
<feature type="binding site" evidence="1">
    <location>
        <position position="62"/>
    </location>
    <ligand>
        <name>NAD(+)</name>
        <dbReference type="ChEBI" id="CHEBI:57540"/>
    </ligand>
</feature>
<feature type="binding site" evidence="1">
    <location>
        <position position="190"/>
    </location>
    <ligand>
        <name>substrate</name>
    </ligand>
</feature>
<feature type="binding site" evidence="1">
    <location>
        <position position="203"/>
    </location>
    <ligand>
        <name>NAD(+)</name>
        <dbReference type="ChEBI" id="CHEBI:57540"/>
    </ligand>
</feature>
<feature type="binding site" evidence="1">
    <location>
        <position position="207"/>
    </location>
    <ligand>
        <name>NAD(+)</name>
        <dbReference type="ChEBI" id="CHEBI:57540"/>
    </ligand>
</feature>
<feature type="binding site" evidence="1">
    <location>
        <position position="239"/>
    </location>
    <ligand>
        <name>NAD(+)</name>
        <dbReference type="ChEBI" id="CHEBI:57540"/>
    </ligand>
</feature>
<feature type="splice variant" id="VSP_008103" description="In isoform 2." evidence="10">
    <location>
        <begin position="1"/>
        <end position="50"/>
    </location>
</feature>
<feature type="sequence variant" id="VAR_052319" description="In dbSNP:rs34583017.">
    <original>R</original>
    <variation>Q</variation>
    <location>
        <position position="218"/>
    </location>
</feature>
<accession>Q9Y394</accession>
<accession>B2R896</accession>
<accession>Q9UKU2</accession>
<sequence length="339" mass="38299">MNWELLLWLLVLCALLLLLVQLLRFLRADGDLTLLWAEWQGRRPEWELTDMVVWVTGASSGIGEELAYQLSKLGVSLVLSARRVHELERVKRRCLENGNLKEKDILVLPLDLTDTGSHEAATKAVLQEFGRIDILVNNGGMSQRSLCMDTSLDVYRKLIELNYLGTVSLTKCVLPHMIERKQGKIVTVNSILGIISVPLSIGYCASKHALRGFFNGLRTELATYPGIIVSNICPGPVQSNIVENSLAGEVTKTIGNNGDQSHKMTTSRCVRLMLISMANDLKEVWISEQPFLLVTYLWQYMPTWAWWITNKMGKKRIENFKSGVDADSSYFKIFKTKHD</sequence>